<keyword id="KW-0025">Alternative splicing</keyword>
<keyword id="KW-0472">Membrane</keyword>
<keyword id="KW-1185">Reference proteome</keyword>
<keyword id="KW-0677">Repeat</keyword>
<keyword id="KW-0812">Transmembrane</keyword>
<keyword id="KW-1133">Transmembrane helix</keyword>
<evidence type="ECO:0000250" key="1"/>
<evidence type="ECO:0000255" key="2"/>
<evidence type="ECO:0000305" key="3"/>
<proteinExistence type="evidence at transcript level"/>
<organism>
    <name type="scientific">Arabidopsis thaliana</name>
    <name type="common">Mouse-ear cress</name>
    <dbReference type="NCBI Taxonomy" id="3702"/>
    <lineage>
        <taxon>Eukaryota</taxon>
        <taxon>Viridiplantae</taxon>
        <taxon>Streptophyta</taxon>
        <taxon>Embryophyta</taxon>
        <taxon>Tracheophyta</taxon>
        <taxon>Spermatophyta</taxon>
        <taxon>Magnoliopsida</taxon>
        <taxon>eudicotyledons</taxon>
        <taxon>Gunneridae</taxon>
        <taxon>Pentapetalae</taxon>
        <taxon>rosids</taxon>
        <taxon>malvids</taxon>
        <taxon>Brassicales</taxon>
        <taxon>Brassicaceae</taxon>
        <taxon>Camelineae</taxon>
        <taxon>Arabidopsis</taxon>
    </lineage>
</organism>
<protein>
    <recommendedName>
        <fullName>WAT1-related protein At3g45870</fullName>
    </recommendedName>
</protein>
<name>WTR25_ARATH</name>
<sequence>MESTVEREAWKAHVAMIGVQLFNGGYHVITKVALNVGVNQLVFCVFRDLIALSILAPLAYIRDKRTRPPLNRQFLLAFFFLGLTGIFGNQLLFLIGLNYTNPTYAAAIQPSIPVFTFILALIMGTERLNLFKLEGQAKVGGTLICVAGAVLMVLFRGLALFGETEAESLGHGESRHTETSGHFMSGFFNGLGRWNLGVLCLIGNCTCMAAFLAIQAPVLKKYPANLSVTAYSYFFGTMFMVTSAFFMTNESTNWSLTRSEFFAVVYAGVIASALNYGLLTWSNKILGPSLVALYNPLQPAASAFLSRIFLGSPIYLGSILGGCAIIAGLYSVTWASYKEKKAAAAMAVIPITSKEAEPLIYKDHKNKPIGHLFTKSPISSPKSDD</sequence>
<accession>Q5PP32</accession>
<accession>A8MR91</accession>
<accession>Q9LZU3</accession>
<comment type="subcellular location">
    <subcellularLocation>
        <location evidence="1">Membrane</location>
        <topology evidence="3">Multi-pass membrane protein</topology>
    </subcellularLocation>
</comment>
<comment type="alternative products">
    <event type="alternative splicing"/>
    <isoform>
        <id>Q5PP32-1</id>
        <name>1</name>
        <sequence type="displayed"/>
    </isoform>
    <isoform>
        <id>Q5PP32-2</id>
        <name>2</name>
        <sequence type="described" ref="VSP_045509"/>
    </isoform>
</comment>
<comment type="similarity">
    <text evidence="3">Belongs to the drug/metabolite transporter (DMT) superfamily. Plant drug/metabolite exporter (P-DME) (TC 2.A.7.4) family.</text>
</comment>
<comment type="sequence caution" evidence="3">
    <conflict type="erroneous gene model prediction">
        <sequence resource="EMBL-CDS" id="CAB82811"/>
    </conflict>
</comment>
<gene>
    <name type="ordered locus">At3g45870</name>
    <name type="ORF">F16L2.80</name>
</gene>
<reference key="1">
    <citation type="journal article" date="2000" name="Nature">
        <title>Sequence and analysis of chromosome 3 of the plant Arabidopsis thaliana.</title>
        <authorList>
            <person name="Salanoubat M."/>
            <person name="Lemcke K."/>
            <person name="Rieger M."/>
            <person name="Ansorge W."/>
            <person name="Unseld M."/>
            <person name="Fartmann B."/>
            <person name="Valle G."/>
            <person name="Bloecker H."/>
            <person name="Perez-Alonso M."/>
            <person name="Obermaier B."/>
            <person name="Delseny M."/>
            <person name="Boutry M."/>
            <person name="Grivell L.A."/>
            <person name="Mache R."/>
            <person name="Puigdomenech P."/>
            <person name="De Simone V."/>
            <person name="Choisne N."/>
            <person name="Artiguenave F."/>
            <person name="Robert C."/>
            <person name="Brottier P."/>
            <person name="Wincker P."/>
            <person name="Cattolico L."/>
            <person name="Weissenbach J."/>
            <person name="Saurin W."/>
            <person name="Quetier F."/>
            <person name="Schaefer M."/>
            <person name="Mueller-Auer S."/>
            <person name="Gabel C."/>
            <person name="Fuchs M."/>
            <person name="Benes V."/>
            <person name="Wurmbach E."/>
            <person name="Drzonek H."/>
            <person name="Erfle H."/>
            <person name="Jordan N."/>
            <person name="Bangert S."/>
            <person name="Wiedelmann R."/>
            <person name="Kranz H."/>
            <person name="Voss H."/>
            <person name="Holland R."/>
            <person name="Brandt P."/>
            <person name="Nyakatura G."/>
            <person name="Vezzi A."/>
            <person name="D'Angelo M."/>
            <person name="Pallavicini A."/>
            <person name="Toppo S."/>
            <person name="Simionati B."/>
            <person name="Conrad A."/>
            <person name="Hornischer K."/>
            <person name="Kauer G."/>
            <person name="Loehnert T.-H."/>
            <person name="Nordsiek G."/>
            <person name="Reichelt J."/>
            <person name="Scharfe M."/>
            <person name="Schoen O."/>
            <person name="Bargues M."/>
            <person name="Terol J."/>
            <person name="Climent J."/>
            <person name="Navarro P."/>
            <person name="Collado C."/>
            <person name="Perez-Perez A."/>
            <person name="Ottenwaelder B."/>
            <person name="Duchemin D."/>
            <person name="Cooke R."/>
            <person name="Laudie M."/>
            <person name="Berger-Llauro C."/>
            <person name="Purnelle B."/>
            <person name="Masuy D."/>
            <person name="de Haan M."/>
            <person name="Maarse A.C."/>
            <person name="Alcaraz J.-P."/>
            <person name="Cottet A."/>
            <person name="Casacuberta E."/>
            <person name="Monfort A."/>
            <person name="Argiriou A."/>
            <person name="Flores M."/>
            <person name="Liguori R."/>
            <person name="Vitale D."/>
            <person name="Mannhaupt G."/>
            <person name="Haase D."/>
            <person name="Schoof H."/>
            <person name="Rudd S."/>
            <person name="Zaccaria P."/>
            <person name="Mewes H.-W."/>
            <person name="Mayer K.F.X."/>
            <person name="Kaul S."/>
            <person name="Town C.D."/>
            <person name="Koo H.L."/>
            <person name="Tallon L.J."/>
            <person name="Jenkins J."/>
            <person name="Rooney T."/>
            <person name="Rizzo M."/>
            <person name="Walts A."/>
            <person name="Utterback T."/>
            <person name="Fujii C.Y."/>
            <person name="Shea T.P."/>
            <person name="Creasy T.H."/>
            <person name="Haas B."/>
            <person name="Maiti R."/>
            <person name="Wu D."/>
            <person name="Peterson J."/>
            <person name="Van Aken S."/>
            <person name="Pai G."/>
            <person name="Militscher J."/>
            <person name="Sellers P."/>
            <person name="Gill J.E."/>
            <person name="Feldblyum T.V."/>
            <person name="Preuss D."/>
            <person name="Lin X."/>
            <person name="Nierman W.C."/>
            <person name="Salzberg S.L."/>
            <person name="White O."/>
            <person name="Venter J.C."/>
            <person name="Fraser C.M."/>
            <person name="Kaneko T."/>
            <person name="Nakamura Y."/>
            <person name="Sato S."/>
            <person name="Kato T."/>
            <person name="Asamizu E."/>
            <person name="Sasamoto S."/>
            <person name="Kimura T."/>
            <person name="Idesawa K."/>
            <person name="Kawashima K."/>
            <person name="Kishida Y."/>
            <person name="Kiyokawa C."/>
            <person name="Kohara M."/>
            <person name="Matsumoto M."/>
            <person name="Matsuno A."/>
            <person name="Muraki A."/>
            <person name="Nakayama S."/>
            <person name="Nakazaki N."/>
            <person name="Shinpo S."/>
            <person name="Takeuchi C."/>
            <person name="Wada T."/>
            <person name="Watanabe A."/>
            <person name="Yamada M."/>
            <person name="Yasuda M."/>
            <person name="Tabata S."/>
        </authorList>
    </citation>
    <scope>NUCLEOTIDE SEQUENCE [LARGE SCALE GENOMIC DNA]</scope>
    <source>
        <strain>cv. Columbia</strain>
    </source>
</reference>
<reference key="2">
    <citation type="journal article" date="2017" name="Plant J.">
        <title>Araport11: a complete reannotation of the Arabidopsis thaliana reference genome.</title>
        <authorList>
            <person name="Cheng C.Y."/>
            <person name="Krishnakumar V."/>
            <person name="Chan A.P."/>
            <person name="Thibaud-Nissen F."/>
            <person name="Schobel S."/>
            <person name="Town C.D."/>
        </authorList>
    </citation>
    <scope>GENOME REANNOTATION</scope>
    <source>
        <strain>cv. Columbia</strain>
    </source>
</reference>
<reference key="3">
    <citation type="submission" date="2005-01" db="EMBL/GenBank/DDBJ databases">
        <title>Arabidopsis ORF clones.</title>
        <authorList>
            <person name="Kim C.J."/>
            <person name="Chen H."/>
            <person name="Cheuk R.F."/>
            <person name="Shinn P."/>
            <person name="Ecker J.R."/>
        </authorList>
    </citation>
    <scope>NUCLEOTIDE SEQUENCE [LARGE SCALE MRNA] (ISOFORM 1)</scope>
    <source>
        <strain>cv. Columbia</strain>
    </source>
</reference>
<feature type="chain" id="PRO_0000421333" description="WAT1-related protein At3g45870">
    <location>
        <begin position="1"/>
        <end position="385"/>
    </location>
</feature>
<feature type="transmembrane region" description="Helical" evidence="2">
    <location>
        <begin position="14"/>
        <end position="34"/>
    </location>
</feature>
<feature type="transmembrane region" description="Helical" evidence="2">
    <location>
        <begin position="41"/>
        <end position="61"/>
    </location>
</feature>
<feature type="transmembrane region" description="Helical" evidence="2">
    <location>
        <begin position="75"/>
        <end position="95"/>
    </location>
</feature>
<feature type="transmembrane region" description="Helical" evidence="2">
    <location>
        <begin position="104"/>
        <end position="124"/>
    </location>
</feature>
<feature type="transmembrane region" description="Helical" evidence="2">
    <location>
        <begin position="141"/>
        <end position="161"/>
    </location>
</feature>
<feature type="transmembrane region" description="Helical" evidence="2">
    <location>
        <begin position="194"/>
        <end position="214"/>
    </location>
</feature>
<feature type="transmembrane region" description="Helical" evidence="2">
    <location>
        <begin position="226"/>
        <end position="246"/>
    </location>
</feature>
<feature type="transmembrane region" description="Helical" evidence="2">
    <location>
        <begin position="261"/>
        <end position="281"/>
    </location>
</feature>
<feature type="transmembrane region" description="Helical" evidence="2">
    <location>
        <begin position="285"/>
        <end position="305"/>
    </location>
</feature>
<feature type="transmembrane region" description="Helical" evidence="2">
    <location>
        <begin position="308"/>
        <end position="328"/>
    </location>
</feature>
<feature type="domain" description="EamA 1">
    <location>
        <begin position="23"/>
        <end position="153"/>
    </location>
</feature>
<feature type="domain" description="EamA 2">
    <location>
        <begin position="216"/>
        <end position="333"/>
    </location>
</feature>
<feature type="splice variant" id="VSP_045509" description="In isoform 2." evidence="3">
    <original>MESTVEREAWKAHVAMIGVQLFNGGYHVITKVALNVGVNQLVFCVFRDLIALSILAPLAYIRDKRTRPPLNRQFLLAFFFLGLTGIFGNQLLFLIGLNYTNPTYAAAIQPSIPVFTFILALIMGT</original>
    <variation>MLQPFSRRSRFLLSSWLSLW</variation>
    <location>
        <begin position="1"/>
        <end position="125"/>
    </location>
</feature>
<dbReference type="EMBL" id="AL162459">
    <property type="protein sequence ID" value="CAB82811.1"/>
    <property type="status" value="ALT_SEQ"/>
    <property type="molecule type" value="Genomic_DNA"/>
</dbReference>
<dbReference type="EMBL" id="CP002686">
    <property type="protein sequence ID" value="AEE78084.1"/>
    <property type="molecule type" value="Genomic_DNA"/>
</dbReference>
<dbReference type="EMBL" id="BT020265">
    <property type="protein sequence ID" value="AAV84486.1"/>
    <property type="molecule type" value="mRNA"/>
</dbReference>
<dbReference type="EMBL" id="BT020559">
    <property type="protein sequence ID" value="AAW70405.1"/>
    <property type="molecule type" value="mRNA"/>
</dbReference>
<dbReference type="PIR" id="T47527">
    <property type="entry name" value="T47527"/>
</dbReference>
<dbReference type="RefSeq" id="NP_190173.2">
    <molecule id="Q5PP32-1"/>
    <property type="nucleotide sequence ID" value="NM_114456.3"/>
</dbReference>
<dbReference type="SMR" id="Q5PP32"/>
<dbReference type="BioGRID" id="9050">
    <property type="interactions" value="8"/>
</dbReference>
<dbReference type="IntAct" id="Q5PP32">
    <property type="interactions" value="8"/>
</dbReference>
<dbReference type="STRING" id="3702.Q5PP32"/>
<dbReference type="PaxDb" id="3702-AT3G45870.1"/>
<dbReference type="EnsemblPlants" id="AT3G45870.1">
    <molecule id="Q5PP32-1"/>
    <property type="protein sequence ID" value="AT3G45870.1"/>
    <property type="gene ID" value="AT3G45870"/>
</dbReference>
<dbReference type="Gramene" id="AT3G45870.1">
    <molecule id="Q5PP32-1"/>
    <property type="protein sequence ID" value="AT3G45870.1"/>
    <property type="gene ID" value="AT3G45870"/>
</dbReference>
<dbReference type="KEGG" id="ath:AT3G45870"/>
<dbReference type="Araport" id="AT3G45870"/>
<dbReference type="TAIR" id="AT3G45870">
    <property type="gene designation" value="UMAMIT3"/>
</dbReference>
<dbReference type="eggNOG" id="ENOG502QUHA">
    <property type="taxonomic scope" value="Eukaryota"/>
</dbReference>
<dbReference type="HOGENOM" id="CLU_025359_1_2_1"/>
<dbReference type="InParanoid" id="Q5PP32"/>
<dbReference type="OMA" id="TWATYKE"/>
<dbReference type="PhylomeDB" id="Q5PP32"/>
<dbReference type="PRO" id="PR:Q5PP32"/>
<dbReference type="Proteomes" id="UP000006548">
    <property type="component" value="Chromosome 3"/>
</dbReference>
<dbReference type="ExpressionAtlas" id="Q5PP32">
    <property type="expression patterns" value="baseline and differential"/>
</dbReference>
<dbReference type="GO" id="GO:0016020">
    <property type="term" value="C:membrane"/>
    <property type="evidence" value="ECO:0007669"/>
    <property type="project" value="UniProtKB-SubCell"/>
</dbReference>
<dbReference type="GO" id="GO:0022857">
    <property type="term" value="F:transmembrane transporter activity"/>
    <property type="evidence" value="ECO:0007669"/>
    <property type="project" value="InterPro"/>
</dbReference>
<dbReference type="InterPro" id="IPR000620">
    <property type="entry name" value="EamA_dom"/>
</dbReference>
<dbReference type="InterPro" id="IPR030184">
    <property type="entry name" value="WAT1-related"/>
</dbReference>
<dbReference type="PANTHER" id="PTHR31218">
    <property type="entry name" value="WAT1-RELATED PROTEIN"/>
    <property type="match status" value="1"/>
</dbReference>
<dbReference type="Pfam" id="PF00892">
    <property type="entry name" value="EamA"/>
    <property type="match status" value="2"/>
</dbReference>
<dbReference type="SUPFAM" id="SSF103481">
    <property type="entry name" value="Multidrug resistance efflux transporter EmrE"/>
    <property type="match status" value="2"/>
</dbReference>